<sequence>MMETERLVLPPPDPLDLPLRAVELGCTGHWELLNLPGAPESSLPHGLPPCAPDLQQEAEQLFLSSPAWLPLHGVEHSARKWQRKTDPWSLLAVLGAPVPSDLQAQRHPTTGQILGYKEVLLENTNLSATTSLSLRRPPGPASQSLWGNPTQYPFWPGGMDEPTITDLNTREEAEEEIDFEKDLLTIPPGFKKGMDFAPKDCPTPAPGLLSLSCMLEPLDLGGGDEDENEAVGQPGGPRGDTVSASPCSAPLARASSLEDLVLKEASTAVSTPEAPEPPSQEQWAIPVDATSPVGDFYRLIPQPAFQWAFEPDVFQKQAILHLERHDSVFVAAHTSAGKTVVAEYAIALAQKHMTRTIYTSPIKALSNQKFRDFRNTFGDVGLLTGDVQLHPEASCLIMTTEILRSMLYSGSDVIRDLEWVIFDEVHYINDVERGVVWEEVLIMLPDHVSIILLSATVPNALEFADWIGRLKRRQIYVISTVTRPVPLEHYLFTGNSSKTQGELFLLLDSRGAFHTKGYYAAVEAKKERMSKHAQTFGAKQPTHQGGPAQDRGVYLSLLASLRTRAQLPVVVFTFSRGRCDEQASGLTSLDLTTSSEKSEIHLFLQRCLARLRGSDRQLPQVLHMSELLNRGLGVHHSGILPILKEIVEMLFSRGLVKVLFATETFAMGVNMPARTVVFDSMRKHDGSTFRDLLPGEYVQMAGRAGRRGLDPTGTVILLCKGRVPEMADLHRMMMGKPSQLQSQFRLTYTMILNLLRVDALRVEDMMKRSFSEFPSRKDSKAHEQALAELTKRLGALEEPDMTGQLVDLPEYYSWGEELTETQHMIQRRIMESVNGLKSLSAGRVVVVKNQEHHNALGVILQVSSNSTSRVFTTLVLCDKPLSQDPQDRGPATAEVPYPDDLVGFKLFLPEGPCDHTVVKLQPGDMAAITTKVLRVNGEKILEDFSKRQQPKFKKDPPLAAVTTAVQELLRLAQAHPAGPPTLDPVNDLQLKDMSVVEGGLRARKLEELIQGAQCVHSPRFPAQYLKLRERMQIQKEMERLRFLLSDQSLLLLPEYHQRVEVLRTLGYVDEAGTVKLAGRVACAMSSHELLLTELMFDNALSTLRPEEIAALLSGLVCQSPGDAGDQLPNTLKQGIERVRAVAKRIGEVQVACGLNQTVEEFVGELNFGLVEVVYEWARGMPFSELAGLSGTPEGLVVRCIQRLAEMCRSLRGAARLVGEPVLGAKMETAATLLRRDIVFAASLYTQ</sequence>
<gene>
    <name evidence="17" type="primary">SKIC2</name>
    <name type="synonym">DDX13</name>
    <name evidence="13" type="synonym">SKI2W</name>
    <name type="synonym">SKIV2</name>
    <name type="synonym">SKIV2L</name>
    <name type="synonym">W</name>
</gene>
<reference key="1">
    <citation type="journal article" date="1995" name="Genomics">
        <title>Identification and characterization of a human cDNA homologous to yeast SKI2.</title>
        <authorList>
            <person name="Lee S.-G."/>
            <person name="Lee I."/>
            <person name="Park S.H."/>
            <person name="Kang C."/>
            <person name="Song K."/>
        </authorList>
    </citation>
    <scope>NUCLEOTIDE SEQUENCE [MRNA]</scope>
    <source>
        <tissue>Liver</tissue>
    </source>
</reference>
<reference key="2">
    <citation type="journal article" date="1995" name="Nucleic Acids Res.">
        <title>Human helicase gene SKI2W in the HLA class III region exhibits striking structural similarities to the yeast antiviral gene SKI2 and to the human gene KIAA0052: emergence of a new gene family.</title>
        <authorList>
            <person name="Dangel A.W."/>
            <person name="Shen L."/>
            <person name="Mendoza A.R."/>
            <person name="Wu L.-C."/>
            <person name="Yu C.Y."/>
        </authorList>
    </citation>
    <scope>NUCLEOTIDE SEQUENCE [GENOMIC DNA / MRNA]</scope>
    <scope>VARIANTS ARG-151 AND LEU-214</scope>
    <scope>CATALYTIC ACTIVITY</scope>
</reference>
<reference key="3">
    <citation type="journal article" date="1996" name="Genomics">
        <title>Localization of eight additional genes in the human major histocompatibility complex, including the gene encoding the casein kinase II beta subunit (CSNK2B).</title>
        <authorList>
            <person name="Albertella M.R."/>
            <person name="Jones H."/>
            <person name="Thomson W."/>
            <person name="Olavesen M.G."/>
            <person name="Campbell R.D."/>
        </authorList>
    </citation>
    <scope>NUCLEOTIDE SEQUENCE [GENOMIC DNA]</scope>
    <scope>VARIANT LEU-214</scope>
</reference>
<reference key="4">
    <citation type="submission" date="1997-09" db="EMBL/GenBank/DDBJ databases">
        <title>Sequence determination of 300 kilobases of the human class III MHC locus.</title>
        <authorList>
            <person name="Rowen L."/>
            <person name="Dankers C."/>
            <person name="Baskin D."/>
            <person name="Faust J."/>
            <person name="Loretz C."/>
            <person name="Ahearn M.E."/>
            <person name="Banta A."/>
            <person name="Swartzell S."/>
            <person name="Smith T.M."/>
            <person name="Spies T."/>
            <person name="Hood L."/>
        </authorList>
    </citation>
    <scope>NUCLEOTIDE SEQUENCE [GENOMIC DNA]</scope>
    <scope>VARIANTS ARG-151; LEU-214; MET-917 AND VAL-1071</scope>
</reference>
<reference key="5">
    <citation type="journal article" date="2003" name="Nature">
        <title>The DNA sequence and analysis of human chromosome 6.</title>
        <authorList>
            <person name="Mungall A.J."/>
            <person name="Palmer S.A."/>
            <person name="Sims S.K."/>
            <person name="Edwards C.A."/>
            <person name="Ashurst J.L."/>
            <person name="Wilming L."/>
            <person name="Jones M.C."/>
            <person name="Horton R."/>
            <person name="Hunt S.E."/>
            <person name="Scott C.E."/>
            <person name="Gilbert J.G.R."/>
            <person name="Clamp M.E."/>
            <person name="Bethel G."/>
            <person name="Milne S."/>
            <person name="Ainscough R."/>
            <person name="Almeida J.P."/>
            <person name="Ambrose K.D."/>
            <person name="Andrews T.D."/>
            <person name="Ashwell R.I.S."/>
            <person name="Babbage A.K."/>
            <person name="Bagguley C.L."/>
            <person name="Bailey J."/>
            <person name="Banerjee R."/>
            <person name="Barker D.J."/>
            <person name="Barlow K.F."/>
            <person name="Bates K."/>
            <person name="Beare D.M."/>
            <person name="Beasley H."/>
            <person name="Beasley O."/>
            <person name="Bird C.P."/>
            <person name="Blakey S.E."/>
            <person name="Bray-Allen S."/>
            <person name="Brook J."/>
            <person name="Brown A.J."/>
            <person name="Brown J.Y."/>
            <person name="Burford D.C."/>
            <person name="Burrill W."/>
            <person name="Burton J."/>
            <person name="Carder C."/>
            <person name="Carter N.P."/>
            <person name="Chapman J.C."/>
            <person name="Clark S.Y."/>
            <person name="Clark G."/>
            <person name="Clee C.M."/>
            <person name="Clegg S."/>
            <person name="Cobley V."/>
            <person name="Collier R.E."/>
            <person name="Collins J.E."/>
            <person name="Colman L.K."/>
            <person name="Corby N.R."/>
            <person name="Coville G.J."/>
            <person name="Culley K.M."/>
            <person name="Dhami P."/>
            <person name="Davies J."/>
            <person name="Dunn M."/>
            <person name="Earthrowl M.E."/>
            <person name="Ellington A.E."/>
            <person name="Evans K.A."/>
            <person name="Faulkner L."/>
            <person name="Francis M.D."/>
            <person name="Frankish A."/>
            <person name="Frankland J."/>
            <person name="French L."/>
            <person name="Garner P."/>
            <person name="Garnett J."/>
            <person name="Ghori M.J."/>
            <person name="Gilby L.M."/>
            <person name="Gillson C.J."/>
            <person name="Glithero R.J."/>
            <person name="Grafham D.V."/>
            <person name="Grant M."/>
            <person name="Gribble S."/>
            <person name="Griffiths C."/>
            <person name="Griffiths M.N.D."/>
            <person name="Hall R."/>
            <person name="Halls K.S."/>
            <person name="Hammond S."/>
            <person name="Harley J.L."/>
            <person name="Hart E.A."/>
            <person name="Heath P.D."/>
            <person name="Heathcott R."/>
            <person name="Holmes S.J."/>
            <person name="Howden P.J."/>
            <person name="Howe K.L."/>
            <person name="Howell G.R."/>
            <person name="Huckle E."/>
            <person name="Humphray S.J."/>
            <person name="Humphries M.D."/>
            <person name="Hunt A.R."/>
            <person name="Johnson C.M."/>
            <person name="Joy A.A."/>
            <person name="Kay M."/>
            <person name="Keenan S.J."/>
            <person name="Kimberley A.M."/>
            <person name="King A."/>
            <person name="Laird G.K."/>
            <person name="Langford C."/>
            <person name="Lawlor S."/>
            <person name="Leongamornlert D.A."/>
            <person name="Leversha M."/>
            <person name="Lloyd C.R."/>
            <person name="Lloyd D.M."/>
            <person name="Loveland J.E."/>
            <person name="Lovell J."/>
            <person name="Martin S."/>
            <person name="Mashreghi-Mohammadi M."/>
            <person name="Maslen G.L."/>
            <person name="Matthews L."/>
            <person name="McCann O.T."/>
            <person name="McLaren S.J."/>
            <person name="McLay K."/>
            <person name="McMurray A."/>
            <person name="Moore M.J.F."/>
            <person name="Mullikin J.C."/>
            <person name="Niblett D."/>
            <person name="Nickerson T."/>
            <person name="Novik K.L."/>
            <person name="Oliver K."/>
            <person name="Overton-Larty E.K."/>
            <person name="Parker A."/>
            <person name="Patel R."/>
            <person name="Pearce A.V."/>
            <person name="Peck A.I."/>
            <person name="Phillimore B.J.C.T."/>
            <person name="Phillips S."/>
            <person name="Plumb R.W."/>
            <person name="Porter K.M."/>
            <person name="Ramsey Y."/>
            <person name="Ranby S.A."/>
            <person name="Rice C.M."/>
            <person name="Ross M.T."/>
            <person name="Searle S.M."/>
            <person name="Sehra H.K."/>
            <person name="Sheridan E."/>
            <person name="Skuce C.D."/>
            <person name="Smith S."/>
            <person name="Smith M."/>
            <person name="Spraggon L."/>
            <person name="Squares S.L."/>
            <person name="Steward C.A."/>
            <person name="Sycamore N."/>
            <person name="Tamlyn-Hall G."/>
            <person name="Tester J."/>
            <person name="Theaker A.J."/>
            <person name="Thomas D.W."/>
            <person name="Thorpe A."/>
            <person name="Tracey A."/>
            <person name="Tromans A."/>
            <person name="Tubby B."/>
            <person name="Wall M."/>
            <person name="Wallis J.M."/>
            <person name="West A.P."/>
            <person name="White S.S."/>
            <person name="Whitehead S.L."/>
            <person name="Whittaker H."/>
            <person name="Wild A."/>
            <person name="Willey D.J."/>
            <person name="Wilmer T.E."/>
            <person name="Wood J.M."/>
            <person name="Wray P.W."/>
            <person name="Wyatt J.C."/>
            <person name="Young L."/>
            <person name="Younger R.M."/>
            <person name="Bentley D.R."/>
            <person name="Coulson A."/>
            <person name="Durbin R.M."/>
            <person name="Hubbard T."/>
            <person name="Sulston J.E."/>
            <person name="Dunham I."/>
            <person name="Rogers J."/>
            <person name="Beck S."/>
        </authorList>
    </citation>
    <scope>NUCLEOTIDE SEQUENCE [LARGE SCALE GENOMIC DNA]</scope>
</reference>
<reference key="6">
    <citation type="journal article" date="2005" name="Genes Dev.">
        <title>The human PAF complex coordinates transcription with events downstream of RNA synthesis.</title>
        <authorList>
            <person name="Zhu B."/>
            <person name="Mandal S.S."/>
            <person name="Pham A.D."/>
            <person name="Zheng Y."/>
            <person name="Erdjument-Bromage H."/>
            <person name="Batra S.K."/>
            <person name="Tempst P."/>
            <person name="Reinberg D."/>
        </authorList>
    </citation>
    <scope>FUNCTION</scope>
    <scope>IDENTIFICATION IN THE SKI COMPLEX</scope>
    <scope>SUBCELLULAR LOCATION</scope>
</reference>
<reference key="7">
    <citation type="journal article" date="2006" name="Cell">
        <title>Global, in vivo, and site-specific phosphorylation dynamics in signaling networks.</title>
        <authorList>
            <person name="Olsen J.V."/>
            <person name="Blagoev B."/>
            <person name="Gnad F."/>
            <person name="Macek B."/>
            <person name="Kumar C."/>
            <person name="Mortensen P."/>
            <person name="Mann M."/>
        </authorList>
    </citation>
    <scope>IDENTIFICATION BY MASS SPECTROMETRY [LARGE SCALE ANALYSIS]</scope>
    <source>
        <tissue>Cervix carcinoma</tissue>
    </source>
</reference>
<reference key="8">
    <citation type="journal article" date="2006" name="Nat. Biotechnol.">
        <title>A probability-based approach for high-throughput protein phosphorylation analysis and site localization.</title>
        <authorList>
            <person name="Beausoleil S.A."/>
            <person name="Villen J."/>
            <person name="Gerber S.A."/>
            <person name="Rush J."/>
            <person name="Gygi S.P."/>
        </authorList>
    </citation>
    <scope>PHOSPHORYLATION [LARGE SCALE ANALYSIS] AT SER-245</scope>
    <scope>IDENTIFICATION BY MASS SPECTROMETRY [LARGE SCALE ANALYSIS]</scope>
    <source>
        <tissue>Cervix carcinoma</tissue>
    </source>
</reference>
<reference key="9">
    <citation type="journal article" date="2008" name="J. Proteome Res.">
        <title>Phosphoproteome of resting human platelets.</title>
        <authorList>
            <person name="Zahedi R.P."/>
            <person name="Lewandrowski U."/>
            <person name="Wiesner J."/>
            <person name="Wortelkamp S."/>
            <person name="Moebius J."/>
            <person name="Schuetz C."/>
            <person name="Walter U."/>
            <person name="Gambaryan S."/>
            <person name="Sickmann A."/>
        </authorList>
    </citation>
    <scope>IDENTIFICATION BY MASS SPECTROMETRY [LARGE SCALE ANALYSIS]</scope>
    <source>
        <tissue>Platelet</tissue>
    </source>
</reference>
<reference key="10">
    <citation type="journal article" date="2008" name="Mol. Cell">
        <title>Kinase-selective enrichment enables quantitative phosphoproteomics of the kinome across the cell cycle.</title>
        <authorList>
            <person name="Daub H."/>
            <person name="Olsen J.V."/>
            <person name="Bairlein M."/>
            <person name="Gnad F."/>
            <person name="Oppermann F.S."/>
            <person name="Korner R."/>
            <person name="Greff Z."/>
            <person name="Keri G."/>
            <person name="Stemmann O."/>
            <person name="Mann M."/>
        </authorList>
    </citation>
    <scope>IDENTIFICATION BY MASS SPECTROMETRY [LARGE SCALE ANALYSIS]</scope>
    <source>
        <tissue>Cervix carcinoma</tissue>
    </source>
</reference>
<reference key="11">
    <citation type="journal article" date="2008" name="Proc. Natl. Acad. Sci. U.S.A.">
        <title>A quantitative atlas of mitotic phosphorylation.</title>
        <authorList>
            <person name="Dephoure N."/>
            <person name="Zhou C."/>
            <person name="Villen J."/>
            <person name="Beausoleil S.A."/>
            <person name="Bakalarski C.E."/>
            <person name="Elledge S.J."/>
            <person name="Gygi S.P."/>
        </authorList>
    </citation>
    <scope>PHOSPHORYLATION [LARGE SCALE ANALYSIS] AT SER-245</scope>
    <scope>IDENTIFICATION BY MASS SPECTROMETRY [LARGE SCALE ANALYSIS]</scope>
    <source>
        <tissue>Cervix carcinoma</tissue>
    </source>
</reference>
<reference key="12">
    <citation type="journal article" date="2009" name="Anal. Chem.">
        <title>Lys-N and trypsin cover complementary parts of the phosphoproteome in a refined SCX-based approach.</title>
        <authorList>
            <person name="Gauci S."/>
            <person name="Helbig A.O."/>
            <person name="Slijper M."/>
            <person name="Krijgsveld J."/>
            <person name="Heck A.J."/>
            <person name="Mohammed S."/>
        </authorList>
    </citation>
    <scope>IDENTIFICATION BY MASS SPECTROMETRY [LARGE SCALE ANALYSIS]</scope>
</reference>
<reference key="13">
    <citation type="journal article" date="2009" name="Mol. Cell. Proteomics">
        <title>Large-scale proteomics analysis of the human kinome.</title>
        <authorList>
            <person name="Oppermann F.S."/>
            <person name="Gnad F."/>
            <person name="Olsen J.V."/>
            <person name="Hornberger R."/>
            <person name="Greff Z."/>
            <person name="Keri G."/>
            <person name="Mann M."/>
            <person name="Daub H."/>
        </authorList>
    </citation>
    <scope>IDENTIFICATION BY MASS SPECTROMETRY [LARGE SCALE ANALYSIS]</scope>
</reference>
<reference key="14">
    <citation type="journal article" date="2010" name="Sci. Signal.">
        <title>Quantitative phosphoproteomics reveals widespread full phosphorylation site occupancy during mitosis.</title>
        <authorList>
            <person name="Olsen J.V."/>
            <person name="Vermeulen M."/>
            <person name="Santamaria A."/>
            <person name="Kumar C."/>
            <person name="Miller M.L."/>
            <person name="Jensen L.J."/>
            <person name="Gnad F."/>
            <person name="Cox J."/>
            <person name="Jensen T.S."/>
            <person name="Nigg E.A."/>
            <person name="Brunak S."/>
            <person name="Mann M."/>
        </authorList>
    </citation>
    <scope>PHOSPHORYLATION [LARGE SCALE ANALYSIS] AT SER-256</scope>
    <scope>IDENTIFICATION BY MASS SPECTROMETRY [LARGE SCALE ANALYSIS]</scope>
    <source>
        <tissue>Cervix carcinoma</tissue>
    </source>
</reference>
<reference key="15">
    <citation type="journal article" date="2011" name="BMC Syst. Biol.">
        <title>Initial characterization of the human central proteome.</title>
        <authorList>
            <person name="Burkard T.R."/>
            <person name="Planyavsky M."/>
            <person name="Kaupe I."/>
            <person name="Breitwieser F.P."/>
            <person name="Buerckstuemmer T."/>
            <person name="Bennett K.L."/>
            <person name="Superti-Furga G."/>
            <person name="Colinge J."/>
        </authorList>
    </citation>
    <scope>IDENTIFICATION BY MASS SPECTROMETRY [LARGE SCALE ANALYSIS]</scope>
</reference>
<reference key="16">
    <citation type="journal article" date="2011" name="Sci. Signal.">
        <title>System-wide temporal characterization of the proteome and phosphoproteome of human embryonic stem cell differentiation.</title>
        <authorList>
            <person name="Rigbolt K.T."/>
            <person name="Prokhorova T.A."/>
            <person name="Akimov V."/>
            <person name="Henningsen J."/>
            <person name="Johansen P.T."/>
            <person name="Kratchmarova I."/>
            <person name="Kassem M."/>
            <person name="Mann M."/>
            <person name="Olsen J.V."/>
            <person name="Blagoev B."/>
        </authorList>
    </citation>
    <scope>PHOSPHORYLATION [LARGE SCALE ANALYSIS] AT SER-256</scope>
    <scope>IDENTIFICATION BY MASS SPECTROMETRY [LARGE SCALE ANALYSIS]</scope>
</reference>
<reference key="17">
    <citation type="journal article" date="2013" name="J. Proteome Res.">
        <title>Toward a comprehensive characterization of a human cancer cell phosphoproteome.</title>
        <authorList>
            <person name="Zhou H."/>
            <person name="Di Palma S."/>
            <person name="Preisinger C."/>
            <person name="Peng M."/>
            <person name="Polat A.N."/>
            <person name="Heck A.J."/>
            <person name="Mohammed S."/>
        </authorList>
    </citation>
    <scope>PHOSPHORYLATION [LARGE SCALE ANALYSIS] AT SER-245 AND SER-256</scope>
    <scope>IDENTIFICATION BY MASS SPECTROMETRY [LARGE SCALE ANALYSIS]</scope>
    <source>
        <tissue>Cervix carcinoma</tissue>
        <tissue>Erythroleukemia</tissue>
    </source>
</reference>
<reference key="18">
    <citation type="journal article" date="2014" name="J. Proteomics">
        <title>An enzyme assisted RP-RPLC approach for in-depth analysis of human liver phosphoproteome.</title>
        <authorList>
            <person name="Bian Y."/>
            <person name="Song C."/>
            <person name="Cheng K."/>
            <person name="Dong M."/>
            <person name="Wang F."/>
            <person name="Huang J."/>
            <person name="Sun D."/>
            <person name="Wang L."/>
            <person name="Ye M."/>
            <person name="Zou H."/>
        </authorList>
    </citation>
    <scope>PHOSPHORYLATION [LARGE SCALE ANALYSIS] AT SER-256</scope>
    <scope>IDENTIFICATION BY MASS SPECTROMETRY [LARGE SCALE ANALYSIS]</scope>
    <source>
        <tissue>Liver</tissue>
    </source>
</reference>
<reference key="19">
    <citation type="journal article" date="2017" name="Nucleic Acids Res.">
        <title>A short splicing isoform of HBS1L links the cytoplasmic exosome and SKI complexes in humans.</title>
        <authorList>
            <person name="Kalisiak K."/>
            <person name="Kulinski T.M."/>
            <person name="Tomecki R."/>
            <person name="Cysewski D."/>
            <person name="Pietras Z."/>
            <person name="Chlebowski A."/>
            <person name="Kowalska K."/>
            <person name="Dziembowski A."/>
        </authorList>
    </citation>
    <scope>INTERACTION WITH ISOFORM 2 OF HBS1L</scope>
</reference>
<reference key="20">
    <citation type="journal article" date="2020" name="Mol. Cell">
        <title>Extraction of mRNA from stalled ribosomes by the Ski complex.</title>
        <authorList>
            <person name="Zinoviev A."/>
            <person name="Ayupov R.K."/>
            <person name="Abaeva I.S."/>
            <person name="Hellen C.U.T."/>
            <person name="Pestova T.V."/>
        </authorList>
    </citation>
    <scope>FUNCTION</scope>
    <scope>IDENTIFICATION IN THE SKI COMPLEX</scope>
</reference>
<reference evidence="18 19 20 21" key="21">
    <citation type="journal article" date="2022" name="Mol. Cell">
        <title>The human SKI complex regulates channeling of ribosome-bound RNA to the exosome via an intrinsic gatekeeping mechanism.</title>
        <authorList>
            <person name="Koegel A."/>
            <person name="Keidel A."/>
            <person name="Bonneau F."/>
            <person name="Schaefer I.B."/>
            <person name="Conti E."/>
        </authorList>
    </citation>
    <scope>STRUCTURE BY ELECTRON MICROSCOPY (3.10 ANGSTROMS) IN COMPLEX WITH SKIC3 AND SKIC8</scope>
    <scope>FUNCTION</scope>
    <scope>CATALYTIC ACTIVITY</scope>
    <scope>IDENTIFICATION IN THE SKI COMPLEX</scope>
    <scope>MUTAGENESIS OF GLU-424</scope>
    <scope>VARIANT THES2 GLY-341</scope>
    <scope>CHARACTERIZATION OF VARIANT THES2 GLY-341</scope>
</reference>
<reference key="22">
    <citation type="journal article" date="2006" name="Science">
        <title>The consensus coding sequences of human breast and colorectal cancers.</title>
        <authorList>
            <person name="Sjoeblom T."/>
            <person name="Jones S."/>
            <person name="Wood L.D."/>
            <person name="Parsons D.W."/>
            <person name="Lin J."/>
            <person name="Barber T.D."/>
            <person name="Mandelker D."/>
            <person name="Leary R.J."/>
            <person name="Ptak J."/>
            <person name="Silliman N."/>
            <person name="Szabo S."/>
            <person name="Buckhaults P."/>
            <person name="Farrell C."/>
            <person name="Meeh P."/>
            <person name="Markowitz S.D."/>
            <person name="Willis J."/>
            <person name="Dawson D."/>
            <person name="Willson J.K.V."/>
            <person name="Gazdar A.F."/>
            <person name="Hartigan J."/>
            <person name="Wu L."/>
            <person name="Liu C."/>
            <person name="Parmigiani G."/>
            <person name="Park B.H."/>
            <person name="Bachman K.E."/>
            <person name="Papadopoulos N."/>
            <person name="Vogelstein B."/>
            <person name="Kinzler K.W."/>
            <person name="Velculescu V.E."/>
        </authorList>
    </citation>
    <scope>VARIANTS [LARGE SCALE ANALYSIS] VAL-183 AND ILE-765</scope>
</reference>
<reference key="23">
    <citation type="journal article" date="2012" name="Am. J. Hum. Genet.">
        <title>SKIV2L mutations cause syndromic diarrhea, or trichohepatoenteric syndrome.</title>
        <authorList>
            <person name="Fabre A."/>
            <person name="Charroux B."/>
            <person name="Martinez-Vinson C."/>
            <person name="Roquelaure B."/>
            <person name="Odul E."/>
            <person name="Sayar E."/>
            <person name="Smith H."/>
            <person name="Colomb V."/>
            <person name="Andre N."/>
            <person name="Hugot J.P."/>
            <person name="Goulet O."/>
            <person name="Lacoste C."/>
            <person name="Sarles J."/>
            <person name="Royet J."/>
            <person name="Levy N."/>
            <person name="Badens C."/>
        </authorList>
    </citation>
    <scope>VARIANT THES2 GLY-341</scope>
</reference>
<comment type="function">
    <text evidence="4 8 9">Helicase component of the SKI complex, a multiprotein complex that assists the RNA-degrading exosome during the mRNA decay and quality-control pathways (PubMed:16024656, PubMed:32006463, PubMed:35120588). The SKI complex catalyzes mRNA extraction from 80S ribosomal complexes in the 3'-5' direction and channels mRNA to the cytosolic exosome for degradation (PubMed:32006463, PubMed:35120588). SKI-mediated extraction of mRNA from stalled ribosomes allow binding of the Pelota-HBS1L complex and subsequent ribosome disassembly by ABCE1 for ribosome recycling (PubMed:32006463). In the nucleus, the SKI complex associates with transcriptionally active genes in a manner dependent on PAF1 complex (PAF1C) (PubMed:16024656).</text>
</comment>
<comment type="catalytic activity">
    <reaction evidence="9 10">
        <text>ATP + H2O = ADP + phosphate + H(+)</text>
        <dbReference type="Rhea" id="RHEA:13065"/>
        <dbReference type="ChEBI" id="CHEBI:15377"/>
        <dbReference type="ChEBI" id="CHEBI:15378"/>
        <dbReference type="ChEBI" id="CHEBI:30616"/>
        <dbReference type="ChEBI" id="CHEBI:43474"/>
        <dbReference type="ChEBI" id="CHEBI:456216"/>
        <dbReference type="EC" id="3.6.4.13"/>
    </reaction>
</comment>
<comment type="subunit">
    <text evidence="4 7 8 9">Component of the SKI complex which consists of SKIC2, SKIC3 and SKIC8 (PubMed:16024656, PubMed:32006463, PubMed:35120588). Interacts with HBS1L isoform 2 (PubMed:28204585).</text>
</comment>
<comment type="interaction">
    <interactant intactId="EBI-373226">
        <id>Q15477</id>
    </interactant>
    <interactant intactId="EBI-1184651">
        <id>P54284</id>
        <label>CACNB3</label>
    </interactant>
    <organismsDiffer>false</organismsDiffer>
    <experiments>3</experiments>
</comment>
<comment type="interaction">
    <interactant intactId="EBI-373226">
        <id>Q15477</id>
    </interactant>
    <interactant intactId="EBI-1383852">
        <id>P54646</id>
        <label>PRKAA2</label>
    </interactant>
    <organismsDiffer>false</organismsDiffer>
    <experiments>3</experiments>
</comment>
<comment type="subcellular location">
    <subcellularLocation>
        <location evidence="4">Nucleus</location>
    </subcellularLocation>
    <subcellularLocation>
        <location evidence="4">Cytoplasm</location>
    </subcellularLocation>
</comment>
<comment type="disease" evidence="6 9">
    <disease id="DI-03422">
        <name>Trichohepatoenteric syndrome 2</name>
        <acronym>THES2</acronym>
        <description>A syndrome characterized by intrauterine growth retardation, severe diarrhea in infancy requiring total parenteral nutrition, facial dysmorphism, immunodeficiency, and hair abnormalities, mostly trichorrhexis nodosa. Hepatic involvement contributes to the poor prognosis of affected patients.</description>
        <dbReference type="MIM" id="614602"/>
    </disease>
    <text>The disease is caused by variants affecting the gene represented in this entry.</text>
</comment>
<comment type="similarity">
    <text evidence="15">Belongs to the helicase family. SKI2 subfamily.</text>
</comment>
<comment type="sequence caution" evidence="15">
    <conflict type="erroneous initiation">
        <sequence resource="EMBL-CDS" id="AAB52523"/>
    </conflict>
    <text>Truncated N-terminus.</text>
</comment>
<feature type="chain" id="PRO_0000102091" description="Superkiller complex protein 2">
    <location>
        <begin position="1"/>
        <end position="1246"/>
    </location>
</feature>
<feature type="domain" description="Helicase ATP-binding" evidence="1">
    <location>
        <begin position="319"/>
        <end position="475"/>
    </location>
</feature>
<feature type="domain" description="Helicase C-terminal" evidence="2">
    <location>
        <begin position="585"/>
        <end position="755"/>
    </location>
</feature>
<feature type="region of interest" description="Disordered" evidence="3">
    <location>
        <begin position="220"/>
        <end position="246"/>
    </location>
</feature>
<feature type="short sequence motif" description="DEVH box" evidence="16">
    <location>
        <begin position="423"/>
        <end position="426"/>
    </location>
</feature>
<feature type="binding site" evidence="1">
    <location>
        <begin position="332"/>
        <end position="339"/>
    </location>
    <ligand>
        <name>ATP</name>
        <dbReference type="ChEBI" id="CHEBI:30616"/>
    </ligand>
</feature>
<feature type="modified residue" description="Phosphoserine" evidence="22 23 26">
    <location>
        <position position="245"/>
    </location>
</feature>
<feature type="modified residue" description="Phosphoserine" evidence="24 25 26 27">
    <location>
        <position position="256"/>
    </location>
</feature>
<feature type="sequence variant" id="VAR_060379" description="In dbSNP:rs438999." evidence="10 12">
    <original>Q</original>
    <variation>R</variation>
    <location>
        <position position="151"/>
    </location>
</feature>
<feature type="sequence variant" id="VAR_035944" description="In a breast cancer sample; somatic mutation." evidence="5">
    <original>L</original>
    <variation>V</variation>
    <location>
        <position position="183"/>
    </location>
</feature>
<feature type="sequence variant" id="VAR_060380" description="In dbSNP:rs437179." evidence="10 11 12">
    <original>M</original>
    <variation>L</variation>
    <location>
        <position position="214"/>
    </location>
</feature>
<feature type="sequence variant" id="VAR_055888" description="In dbSNP:rs36038685.">
    <original>R</original>
    <variation>W</variation>
    <location>
        <position position="324"/>
    </location>
</feature>
<feature type="sequence variant" id="VAR_067721" description="In THES2; abolished ATPase activity; dbSNP:rs281875237." evidence="6 9">
    <original>V</original>
    <variation>G</variation>
    <location>
        <position position="341"/>
    </location>
</feature>
<feature type="sequence variant" id="VAR_035945" description="In a colorectal cancer sample; somatic mutation; dbSNP:rs557829269." evidence="5">
    <original>M</original>
    <variation>I</variation>
    <location>
        <position position="765"/>
    </location>
</feature>
<feature type="sequence variant" id="VAR_055889" description="In dbSNP:rs3911893.">
    <original>D</original>
    <variation>N</variation>
    <location>
        <position position="887"/>
    </location>
</feature>
<feature type="sequence variant" id="VAR_055890" description="In dbSNP:rs106287." evidence="12">
    <original>V</original>
    <variation>M</variation>
    <location>
        <position position="917"/>
    </location>
</feature>
<feature type="sequence variant" id="VAR_055891" description="In dbSNP:rs449643." evidence="12">
    <original>A</original>
    <variation>V</variation>
    <location>
        <position position="1071"/>
    </location>
</feature>
<feature type="sequence variant" id="VAR_060381" description="In dbSNP:rs2734329.">
    <original>G</original>
    <variation>R</variation>
    <location>
        <position position="1153"/>
    </location>
</feature>
<feature type="sequence variant" id="VAR_060382" description="In dbSNP:rs2746400.">
    <original>V</original>
    <variation>G</variation>
    <location>
        <position position="1238"/>
    </location>
</feature>
<feature type="mutagenesis site" description="Abolished helicase activity." evidence="9">
    <original>E</original>
    <variation>Q</variation>
    <location>
        <position position="424"/>
    </location>
</feature>
<feature type="sequence conflict" description="In Ref. 1; AAB52523." evidence="15" ref="1">
    <original>S</original>
    <variation>T</variation>
    <location>
        <position position="366"/>
    </location>
</feature>
<feature type="sequence conflict" description="In Ref. 2; CAA88733." evidence="15" ref="2">
    <original>H</original>
    <variation>Q</variation>
    <location>
        <position position="623"/>
    </location>
</feature>
<feature type="sequence conflict" description="In Ref. 2; CAA88733." evidence="15" ref="2">
    <original>L</original>
    <variation>F</variation>
    <location>
        <position position="1052"/>
    </location>
</feature>
<feature type="strand" evidence="28">
    <location>
        <begin position="10"/>
        <end position="12"/>
    </location>
</feature>
<feature type="strand" evidence="28">
    <location>
        <begin position="14"/>
        <end position="16"/>
    </location>
</feature>
<feature type="strand" evidence="28">
    <location>
        <begin position="20"/>
        <end position="23"/>
    </location>
</feature>
<feature type="strand" evidence="28">
    <location>
        <begin position="25"/>
        <end position="28"/>
    </location>
</feature>
<feature type="strand" evidence="28">
    <location>
        <begin position="30"/>
        <end position="35"/>
    </location>
</feature>
<feature type="helix" evidence="28">
    <location>
        <begin position="54"/>
        <end position="63"/>
    </location>
</feature>
<feature type="helix" evidence="29">
    <location>
        <begin position="66"/>
        <end position="68"/>
    </location>
</feature>
<feature type="helix" evidence="28">
    <location>
        <begin position="70"/>
        <end position="72"/>
    </location>
</feature>
<feature type="strand" evidence="28">
    <location>
        <begin position="73"/>
        <end position="77"/>
    </location>
</feature>
<feature type="helix" evidence="28">
    <location>
        <begin position="87"/>
        <end position="90"/>
    </location>
</feature>
<feature type="strand" evidence="28">
    <location>
        <begin position="108"/>
        <end position="110"/>
    </location>
</feature>
<feature type="turn" evidence="28">
    <location>
        <begin position="128"/>
        <end position="130"/>
    </location>
</feature>
<feature type="strand" evidence="28">
    <location>
        <begin position="140"/>
        <end position="142"/>
    </location>
</feature>
<feature type="strand" evidence="28">
    <location>
        <begin position="179"/>
        <end position="182"/>
    </location>
</feature>
<feature type="helix" evidence="28">
    <location>
        <begin position="253"/>
        <end position="262"/>
    </location>
</feature>
<feature type="strand" evidence="28">
    <location>
        <begin position="283"/>
        <end position="286"/>
    </location>
</feature>
<feature type="strand" evidence="28">
    <location>
        <begin position="289"/>
        <end position="292"/>
    </location>
</feature>
<feature type="strand" evidence="28">
    <location>
        <begin position="296"/>
        <end position="299"/>
    </location>
</feature>
<feature type="helix" evidence="28">
    <location>
        <begin position="313"/>
        <end position="322"/>
    </location>
</feature>
<feature type="turn" evidence="28">
    <location>
        <begin position="323"/>
        <end position="325"/>
    </location>
</feature>
<feature type="strand" evidence="28">
    <location>
        <begin position="327"/>
        <end position="331"/>
    </location>
</feature>
<feature type="helix" evidence="28">
    <location>
        <begin position="335"/>
        <end position="352"/>
    </location>
</feature>
<feature type="strand" evidence="28">
    <location>
        <begin position="355"/>
        <end position="359"/>
    </location>
</feature>
<feature type="helix" evidence="28">
    <location>
        <begin position="365"/>
        <end position="376"/>
    </location>
</feature>
<feature type="strand" evidence="28">
    <location>
        <begin position="393"/>
        <end position="398"/>
    </location>
</feature>
<feature type="helix" evidence="28">
    <location>
        <begin position="400"/>
        <end position="408"/>
    </location>
</feature>
<feature type="turn" evidence="28">
    <location>
        <begin position="411"/>
        <end position="413"/>
    </location>
</feature>
<feature type="helix" evidence="28">
    <location>
        <begin position="414"/>
        <end position="416"/>
    </location>
</feature>
<feature type="strand" evidence="28">
    <location>
        <begin position="417"/>
        <end position="422"/>
    </location>
</feature>
<feature type="helix" evidence="28">
    <location>
        <begin position="425"/>
        <end position="427"/>
    </location>
</feature>
<feature type="turn" evidence="28">
    <location>
        <begin position="431"/>
        <end position="433"/>
    </location>
</feature>
<feature type="helix" evidence="28">
    <location>
        <begin position="434"/>
        <end position="443"/>
    </location>
</feature>
<feature type="strand" evidence="28">
    <location>
        <begin position="449"/>
        <end position="452"/>
    </location>
</feature>
<feature type="turn" evidence="28">
    <location>
        <begin position="460"/>
        <end position="463"/>
    </location>
</feature>
<feature type="helix" evidence="28">
    <location>
        <begin position="464"/>
        <end position="470"/>
    </location>
</feature>
<feature type="strand" evidence="28">
    <location>
        <begin position="475"/>
        <end position="479"/>
    </location>
</feature>
<feature type="strand" evidence="28">
    <location>
        <begin position="487"/>
        <end position="492"/>
    </location>
</feature>
<feature type="turn" evidence="28">
    <location>
        <begin position="497"/>
        <end position="499"/>
    </location>
</feature>
<feature type="strand" evidence="28">
    <location>
        <begin position="503"/>
        <end position="507"/>
    </location>
</feature>
<feature type="helix" evidence="28">
    <location>
        <begin position="515"/>
        <end position="528"/>
    </location>
</feature>
<feature type="helix" evidence="28">
    <location>
        <begin position="547"/>
        <end position="562"/>
    </location>
</feature>
<feature type="turn" evidence="28">
    <location>
        <begin position="563"/>
        <end position="565"/>
    </location>
</feature>
<feature type="strand" evidence="28">
    <location>
        <begin position="569"/>
        <end position="572"/>
    </location>
</feature>
<feature type="helix" evidence="28">
    <location>
        <begin position="576"/>
        <end position="586"/>
    </location>
</feature>
<feature type="helix" evidence="28">
    <location>
        <begin position="594"/>
        <end position="608"/>
    </location>
</feature>
<feature type="helix" evidence="28">
    <location>
        <begin position="614"/>
        <end position="616"/>
    </location>
</feature>
<feature type="helix" evidence="28">
    <location>
        <begin position="619"/>
        <end position="630"/>
    </location>
</feature>
<feature type="strand" evidence="28">
    <location>
        <begin position="632"/>
        <end position="635"/>
    </location>
</feature>
<feature type="strand" evidence="28">
    <location>
        <begin position="637"/>
        <end position="639"/>
    </location>
</feature>
<feature type="helix" evidence="28">
    <location>
        <begin position="641"/>
        <end position="651"/>
    </location>
</feature>
<feature type="turn" evidence="28">
    <location>
        <begin position="652"/>
        <end position="654"/>
    </location>
</feature>
<feature type="strand" evidence="28">
    <location>
        <begin position="658"/>
        <end position="661"/>
    </location>
</feature>
<feature type="helix" evidence="28">
    <location>
        <begin position="663"/>
        <end position="667"/>
    </location>
</feature>
<feature type="strand" evidence="28">
    <location>
        <begin position="674"/>
        <end position="677"/>
    </location>
</feature>
<feature type="strand" evidence="28">
    <location>
        <begin position="681"/>
        <end position="683"/>
    </location>
</feature>
<feature type="helix" evidence="28">
    <location>
        <begin position="694"/>
        <end position="702"/>
    </location>
</feature>
<feature type="strand" evidence="28">
    <location>
        <begin position="707"/>
        <end position="711"/>
    </location>
</feature>
<feature type="strand" evidence="28">
    <location>
        <begin position="713"/>
        <end position="717"/>
    </location>
</feature>
<feature type="helix" evidence="28">
    <location>
        <begin position="726"/>
        <end position="733"/>
    </location>
</feature>
<feature type="helix" evidence="28">
    <location>
        <begin position="748"/>
        <end position="755"/>
    </location>
</feature>
<feature type="strand" evidence="28">
    <location>
        <begin position="756"/>
        <end position="759"/>
    </location>
</feature>
<feature type="helix" evidence="28">
    <location>
        <begin position="762"/>
        <end position="767"/>
    </location>
</feature>
<feature type="helix" evidence="28">
    <location>
        <begin position="770"/>
        <end position="772"/>
    </location>
</feature>
<feature type="helix" evidence="28">
    <location>
        <begin position="773"/>
        <end position="776"/>
    </location>
</feature>
<feature type="helix" evidence="28">
    <location>
        <begin position="779"/>
        <end position="793"/>
    </location>
</feature>
<feature type="turn" evidence="28">
    <location>
        <begin position="804"/>
        <end position="807"/>
    </location>
</feature>
<feature type="helix" evidence="28">
    <location>
        <begin position="808"/>
        <end position="830"/>
    </location>
</feature>
<feature type="helix" evidence="28">
    <location>
        <begin position="833"/>
        <end position="838"/>
    </location>
</feature>
<feature type="strand" evidence="28">
    <location>
        <begin position="843"/>
        <end position="851"/>
    </location>
</feature>
<feature type="strand" evidence="28">
    <location>
        <begin position="853"/>
        <end position="862"/>
    </location>
</feature>
<feature type="strand" evidence="28">
    <location>
        <begin position="866"/>
        <end position="868"/>
    </location>
</feature>
<feature type="strand" evidence="28">
    <location>
        <begin position="871"/>
        <end position="875"/>
    </location>
</feature>
<feature type="helix" evidence="28">
    <location>
        <begin position="885"/>
        <end position="887"/>
    </location>
</feature>
<feature type="turn" evidence="28">
    <location>
        <begin position="898"/>
        <end position="900"/>
    </location>
</feature>
<feature type="strand" evidence="28">
    <location>
        <begin position="901"/>
        <end position="903"/>
    </location>
</feature>
<feature type="strand" evidence="28">
    <location>
        <begin position="916"/>
        <end position="920"/>
    </location>
</feature>
<feature type="helix" evidence="28">
    <location>
        <begin position="922"/>
        <end position="924"/>
    </location>
</feature>
<feature type="strand" evidence="28">
    <location>
        <begin position="925"/>
        <end position="930"/>
    </location>
</feature>
<feature type="helix" evidence="28">
    <location>
        <begin position="937"/>
        <end position="947"/>
    </location>
</feature>
<feature type="turn" evidence="28">
    <location>
        <begin position="950"/>
        <end position="954"/>
    </location>
</feature>
<feature type="helix" evidence="28">
    <location>
        <begin position="959"/>
        <end position="973"/>
    </location>
</feature>
<feature type="turn" evidence="28">
    <location>
        <begin position="984"/>
        <end position="989"/>
    </location>
</feature>
<feature type="helix" evidence="28">
    <location>
        <begin position="993"/>
        <end position="1009"/>
    </location>
</feature>
<feature type="helix" evidence="28">
    <location>
        <begin position="1014"/>
        <end position="1016"/>
    </location>
</feature>
<feature type="helix" evidence="28">
    <location>
        <begin position="1020"/>
        <end position="1043"/>
    </location>
</feature>
<feature type="helix" evidence="28">
    <location>
        <begin position="1052"/>
        <end position="1064"/>
    </location>
</feature>
<feature type="turn" evidence="28">
    <location>
        <begin position="1065"/>
        <end position="1067"/>
    </location>
</feature>
<feature type="helix" evidence="28">
    <location>
        <begin position="1076"/>
        <end position="1082"/>
    </location>
</feature>
<feature type="helix" evidence="28">
    <location>
        <begin position="1088"/>
        <end position="1096"/>
    </location>
</feature>
<feature type="turn" evidence="28">
    <location>
        <begin position="1097"/>
        <end position="1102"/>
    </location>
</feature>
<feature type="helix" evidence="28">
    <location>
        <begin position="1105"/>
        <end position="1112"/>
    </location>
</feature>
<feature type="helix" evidence="28">
    <location>
        <begin position="1113"/>
        <end position="1115"/>
    </location>
</feature>
<feature type="helix" evidence="28">
    <location>
        <begin position="1129"/>
        <end position="1150"/>
    </location>
</feature>
<feature type="turn" evidence="28">
    <location>
        <begin position="1151"/>
        <end position="1153"/>
    </location>
</feature>
<feature type="helix" evidence="28">
    <location>
        <begin position="1158"/>
        <end position="1162"/>
    </location>
</feature>
<feature type="helix" evidence="28">
    <location>
        <begin position="1170"/>
        <end position="1176"/>
    </location>
</feature>
<feature type="turn" evidence="28">
    <location>
        <begin position="1177"/>
        <end position="1179"/>
    </location>
</feature>
<feature type="helix" evidence="28">
    <location>
        <begin position="1182"/>
        <end position="1188"/>
    </location>
</feature>
<feature type="strand" evidence="28">
    <location>
        <begin position="1189"/>
        <end position="1191"/>
    </location>
</feature>
<feature type="helix" evidence="28">
    <location>
        <begin position="1193"/>
        <end position="1204"/>
    </location>
</feature>
<feature type="turn" evidence="28">
    <location>
        <begin position="1205"/>
        <end position="1208"/>
    </location>
</feature>
<feature type="helix" evidence="28">
    <location>
        <begin position="1209"/>
        <end position="1217"/>
    </location>
</feature>
<feature type="helix" evidence="28">
    <location>
        <begin position="1220"/>
        <end position="1229"/>
    </location>
</feature>
<feature type="turn" evidence="28">
    <location>
        <begin position="1230"/>
        <end position="1233"/>
    </location>
</feature>
<feature type="helix" evidence="28">
    <location>
        <begin position="1237"/>
        <end position="1239"/>
    </location>
</feature>
<feature type="turn" evidence="28">
    <location>
        <begin position="1243"/>
        <end position="1245"/>
    </location>
</feature>
<name>SKI2_HUMAN</name>
<proteinExistence type="evidence at protein level"/>
<dbReference type="EC" id="3.6.4.13" evidence="9 10"/>
<dbReference type="EMBL" id="U09877">
    <property type="protein sequence ID" value="AAB52523.1"/>
    <property type="status" value="ALT_INIT"/>
    <property type="molecule type" value="mRNA"/>
</dbReference>
<dbReference type="EMBL" id="X98378">
    <property type="protein sequence ID" value="CAA67024.1"/>
    <property type="molecule type" value="Genomic_DNA"/>
</dbReference>
<dbReference type="EMBL" id="Z48796">
    <property type="protein sequence ID" value="CAA88733.1"/>
    <property type="molecule type" value="mRNA"/>
</dbReference>
<dbReference type="EMBL" id="AF019413">
    <property type="protein sequence ID" value="AAB67978.1"/>
    <property type="molecule type" value="Genomic_DNA"/>
</dbReference>
<dbReference type="EMBL" id="AL662849">
    <property type="status" value="NOT_ANNOTATED_CDS"/>
    <property type="molecule type" value="Genomic_DNA"/>
</dbReference>
<dbReference type="EMBL" id="AL645922">
    <property type="status" value="NOT_ANNOTATED_CDS"/>
    <property type="molecule type" value="Genomic_DNA"/>
</dbReference>
<dbReference type="CCDS" id="CCDS4731.1"/>
<dbReference type="PIR" id="S56752">
    <property type="entry name" value="S56752"/>
</dbReference>
<dbReference type="RefSeq" id="NP_008860.4">
    <property type="nucleotide sequence ID" value="NM_006929.4"/>
</dbReference>
<dbReference type="PDB" id="7QDR">
    <property type="method" value="EM"/>
    <property type="resolution" value="3.70 A"/>
    <property type="chains" value="A=1-1246"/>
</dbReference>
<dbReference type="PDB" id="7QDS">
    <property type="method" value="EM"/>
    <property type="resolution" value="3.80 A"/>
    <property type="chains" value="A=1-1246"/>
</dbReference>
<dbReference type="PDB" id="7QDY">
    <property type="method" value="EM"/>
    <property type="resolution" value="3.10 A"/>
    <property type="chains" value="A=1-1246"/>
</dbReference>
<dbReference type="PDB" id="7QDZ">
    <property type="method" value="EM"/>
    <property type="resolution" value="3.60 A"/>
    <property type="chains" value="A=1-1246"/>
</dbReference>
<dbReference type="PDB" id="7QE0">
    <property type="method" value="EM"/>
    <property type="resolution" value="6.50 A"/>
    <property type="chains" value="A=1-1246"/>
</dbReference>
<dbReference type="PDB" id="9G8M">
    <property type="method" value="EM"/>
    <property type="resolution" value="3.30 A"/>
    <property type="chains" value="A=1-1246"/>
</dbReference>
<dbReference type="PDB" id="9G8N">
    <property type="method" value="EM"/>
    <property type="resolution" value="3.70 A"/>
    <property type="chains" value="A=1-1246"/>
</dbReference>
<dbReference type="PDB" id="9G8O">
    <property type="method" value="EM"/>
    <property type="resolution" value="3.40 A"/>
    <property type="chains" value="A=1-1246"/>
</dbReference>
<dbReference type="PDB" id="9G8P">
    <property type="method" value="EM"/>
    <property type="resolution" value="7.00 A"/>
    <property type="chains" value="A=1-1246"/>
</dbReference>
<dbReference type="PDB" id="9G8Q">
    <property type="method" value="EM"/>
    <property type="resolution" value="4.10 A"/>
    <property type="chains" value="A=1-1246"/>
</dbReference>
<dbReference type="PDB" id="9G8R">
    <property type="method" value="EM"/>
    <property type="resolution" value="3.40 A"/>
    <property type="chains" value="A=1-774, A=1049-1246"/>
</dbReference>
<dbReference type="PDBsum" id="7QDR"/>
<dbReference type="PDBsum" id="7QDS"/>
<dbReference type="PDBsum" id="7QDY"/>
<dbReference type="PDBsum" id="7QDZ"/>
<dbReference type="PDBsum" id="7QE0"/>
<dbReference type="PDBsum" id="9G8M"/>
<dbReference type="PDBsum" id="9G8N"/>
<dbReference type="PDBsum" id="9G8O"/>
<dbReference type="PDBsum" id="9G8P"/>
<dbReference type="PDBsum" id="9G8Q"/>
<dbReference type="PDBsum" id="9G8R"/>
<dbReference type="EMDB" id="EMD-13923"/>
<dbReference type="EMDB" id="EMD-13925"/>
<dbReference type="EMDB" id="EMD-13927"/>
<dbReference type="EMDB" id="EMD-13928"/>
<dbReference type="EMDB" id="EMD-13929"/>
<dbReference type="EMDB" id="EMD-24884"/>
<dbReference type="EMDB" id="EMD-51132"/>
<dbReference type="EMDB" id="EMD-51133"/>
<dbReference type="EMDB" id="EMD-51134"/>
<dbReference type="EMDB" id="EMD-51135"/>
<dbReference type="EMDB" id="EMD-51136"/>
<dbReference type="EMDB" id="EMD-51137"/>
<dbReference type="EMDB" id="EMD-7818"/>
<dbReference type="EMDB" id="EMD-7819"/>
<dbReference type="SMR" id="Q15477"/>
<dbReference type="BioGRID" id="112390">
    <property type="interactions" value="125"/>
</dbReference>
<dbReference type="ComplexPortal" id="CPX-2736">
    <property type="entry name" value="SKI complex"/>
</dbReference>
<dbReference type="CORUM" id="Q15477"/>
<dbReference type="FunCoup" id="Q15477">
    <property type="interactions" value="1794"/>
</dbReference>
<dbReference type="IntAct" id="Q15477">
    <property type="interactions" value="48"/>
</dbReference>
<dbReference type="MINT" id="Q15477"/>
<dbReference type="STRING" id="9606.ENSP00000364543"/>
<dbReference type="MoonDB" id="Q15477">
    <property type="type" value="Predicted"/>
</dbReference>
<dbReference type="GlyGen" id="Q15477">
    <property type="glycosylation" value="2 sites, 1 O-linked glycan (1 site)"/>
</dbReference>
<dbReference type="iPTMnet" id="Q15477"/>
<dbReference type="PhosphoSitePlus" id="Q15477"/>
<dbReference type="SwissPalm" id="Q15477"/>
<dbReference type="BioMuta" id="SKIV2L"/>
<dbReference type="DMDM" id="313104288"/>
<dbReference type="jPOST" id="Q15477"/>
<dbReference type="MassIVE" id="Q15477"/>
<dbReference type="PaxDb" id="9606-ENSP00000364543"/>
<dbReference type="PeptideAtlas" id="Q15477"/>
<dbReference type="ProteomicsDB" id="60607"/>
<dbReference type="Pumba" id="Q15477"/>
<dbReference type="Antibodypedia" id="28089">
    <property type="antibodies" value="95 antibodies from 23 providers"/>
</dbReference>
<dbReference type="DNASU" id="6499"/>
<dbReference type="Ensembl" id="ENST00000375394.7">
    <property type="protein sequence ID" value="ENSP00000364543.2"/>
    <property type="gene ID" value="ENSG00000204351.13"/>
</dbReference>
<dbReference type="Ensembl" id="ENST00000383336.6">
    <property type="protein sequence ID" value="ENSP00000372827.4"/>
    <property type="gene ID" value="ENSG00000206353.11"/>
</dbReference>
<dbReference type="Ensembl" id="ENST00000412823.4">
    <property type="protein sequence ID" value="ENSP00000400626.2"/>
    <property type="gene ID" value="ENSG00000232616.9"/>
</dbReference>
<dbReference type="Ensembl" id="ENST00000421789.4">
    <property type="protein sequence ID" value="ENSP00000399530.2"/>
    <property type="gene ID" value="ENSG00000228896.9"/>
</dbReference>
<dbReference type="Ensembl" id="ENST00000429465.4">
    <property type="protein sequence ID" value="ENSP00000412310.2"/>
    <property type="gene ID" value="ENSG00000223493.9"/>
</dbReference>
<dbReference type="Ensembl" id="ENST00000448219.4">
    <property type="protein sequence ID" value="ENSP00000394400.2"/>
    <property type="gene ID" value="ENSG00000225737.9"/>
</dbReference>
<dbReference type="GeneID" id="6499"/>
<dbReference type="KEGG" id="hsa:6499"/>
<dbReference type="MANE-Select" id="ENST00000375394.7">
    <property type="protein sequence ID" value="ENSP00000364543.2"/>
    <property type="RefSeq nucleotide sequence ID" value="NM_006929.5"/>
    <property type="RefSeq protein sequence ID" value="NP_008860.4"/>
</dbReference>
<dbReference type="UCSC" id="uc003nyn.2">
    <property type="organism name" value="human"/>
</dbReference>
<dbReference type="AGR" id="HGNC:10898"/>
<dbReference type="CTD" id="6499"/>
<dbReference type="DisGeNET" id="6499"/>
<dbReference type="GeneCards" id="SKIC2"/>
<dbReference type="GeneReviews" id="SKIC2"/>
<dbReference type="HGNC" id="HGNC:10898">
    <property type="gene designation" value="SKIC2"/>
</dbReference>
<dbReference type="HPA" id="ENSG00000204351">
    <property type="expression patterns" value="Low tissue specificity"/>
</dbReference>
<dbReference type="MalaCards" id="SKIC2"/>
<dbReference type="MIM" id="600478">
    <property type="type" value="gene"/>
</dbReference>
<dbReference type="MIM" id="614602">
    <property type="type" value="phenotype"/>
</dbReference>
<dbReference type="neXtProt" id="NX_Q15477"/>
<dbReference type="OpenTargets" id="ENSG00000204351"/>
<dbReference type="Orphanet" id="84064">
    <property type="disease" value="Syndromic diarrhea"/>
</dbReference>
<dbReference type="PharmGKB" id="PA35798"/>
<dbReference type="VEuPathDB" id="HostDB:ENSG00000204351"/>
<dbReference type="eggNOG" id="KOG0947">
    <property type="taxonomic scope" value="Eukaryota"/>
</dbReference>
<dbReference type="GeneTree" id="ENSGT00940000158255"/>
<dbReference type="HOGENOM" id="CLU_002902_1_0_1"/>
<dbReference type="InParanoid" id="Q15477"/>
<dbReference type="OMA" id="DHVNIIM"/>
<dbReference type="OrthoDB" id="64767at2759"/>
<dbReference type="PAN-GO" id="Q15477">
    <property type="GO annotations" value="3 GO annotations based on evolutionary models"/>
</dbReference>
<dbReference type="PhylomeDB" id="Q15477"/>
<dbReference type="TreeFam" id="TF314438"/>
<dbReference type="PathwayCommons" id="Q15477"/>
<dbReference type="Reactome" id="R-HSA-390471">
    <property type="pathway name" value="Association of TriC/CCT with target proteins during biosynthesis"/>
</dbReference>
<dbReference type="Reactome" id="R-HSA-429958">
    <property type="pathway name" value="mRNA decay by 3' to 5' exoribonuclease"/>
</dbReference>
<dbReference type="SignaLink" id="Q15477"/>
<dbReference type="BioGRID-ORCS" id="6499">
    <property type="hits" value="50 hits in 1157 CRISPR screens"/>
</dbReference>
<dbReference type="CD-CODE" id="91857CE7">
    <property type="entry name" value="Nucleolus"/>
</dbReference>
<dbReference type="CD-CODE" id="FB4E32DD">
    <property type="entry name" value="Presynaptic clusters and postsynaptic densities"/>
</dbReference>
<dbReference type="ChiTaRS" id="SKIV2L">
    <property type="organism name" value="human"/>
</dbReference>
<dbReference type="GeneWiki" id="SKIV2L"/>
<dbReference type="GenomeRNAi" id="6499"/>
<dbReference type="Pharos" id="Q15477">
    <property type="development level" value="Tbio"/>
</dbReference>
<dbReference type="PRO" id="PR:Q15477"/>
<dbReference type="Proteomes" id="UP000005640">
    <property type="component" value="Chromosome 6"/>
</dbReference>
<dbReference type="RNAct" id="Q15477">
    <property type="molecule type" value="protein"/>
</dbReference>
<dbReference type="Bgee" id="ENSG00000204351">
    <property type="expression patterns" value="Expressed in right lobe of liver and 97 other cell types or tissues"/>
</dbReference>
<dbReference type="ExpressionAtlas" id="Q15477">
    <property type="expression patterns" value="baseline and differential"/>
</dbReference>
<dbReference type="GO" id="GO:0005829">
    <property type="term" value="C:cytosol"/>
    <property type="evidence" value="ECO:0000304"/>
    <property type="project" value="Reactome"/>
</dbReference>
<dbReference type="GO" id="GO:0005634">
    <property type="term" value="C:nucleus"/>
    <property type="evidence" value="ECO:0007669"/>
    <property type="project" value="UniProtKB-SubCell"/>
</dbReference>
<dbReference type="GO" id="GO:0055087">
    <property type="term" value="C:Ski complex"/>
    <property type="evidence" value="ECO:0000314"/>
    <property type="project" value="UniProtKB"/>
</dbReference>
<dbReference type="GO" id="GO:0034458">
    <property type="term" value="F:3'-5' RNA helicase activity"/>
    <property type="evidence" value="ECO:0000314"/>
    <property type="project" value="UniProtKB"/>
</dbReference>
<dbReference type="GO" id="GO:0005524">
    <property type="term" value="F:ATP binding"/>
    <property type="evidence" value="ECO:0007669"/>
    <property type="project" value="UniProtKB-KW"/>
</dbReference>
<dbReference type="GO" id="GO:0016887">
    <property type="term" value="F:ATP hydrolysis activity"/>
    <property type="evidence" value="ECO:0007669"/>
    <property type="project" value="RHEA"/>
</dbReference>
<dbReference type="GO" id="GO:0003723">
    <property type="term" value="F:RNA binding"/>
    <property type="evidence" value="ECO:0007669"/>
    <property type="project" value="UniProtKB-KW"/>
</dbReference>
<dbReference type="GO" id="GO:0003724">
    <property type="term" value="F:RNA helicase activity"/>
    <property type="evidence" value="ECO:0000318"/>
    <property type="project" value="GO_Central"/>
</dbReference>
<dbReference type="GO" id="GO:0070478">
    <property type="term" value="P:nuclear-transcribed mRNA catabolic process, 3'-5' exonucleolytic nonsense-mediated decay"/>
    <property type="evidence" value="ECO:0000314"/>
    <property type="project" value="UniProtKB"/>
</dbReference>
<dbReference type="GO" id="GO:0072344">
    <property type="term" value="P:rescue of stalled ribosome"/>
    <property type="evidence" value="ECO:0000314"/>
    <property type="project" value="UniProtKB"/>
</dbReference>
<dbReference type="CDD" id="cd18027">
    <property type="entry name" value="DEXHc_SKIV2L"/>
    <property type="match status" value="1"/>
</dbReference>
<dbReference type="CDD" id="cd18795">
    <property type="entry name" value="SF2_C_Ski2"/>
    <property type="match status" value="1"/>
</dbReference>
<dbReference type="FunFam" id="3.40.50.300:FF:000354">
    <property type="entry name" value="ATP-dependent RNA helicase SKI2"/>
    <property type="match status" value="1"/>
</dbReference>
<dbReference type="FunFam" id="3.40.50.300:FF:000447">
    <property type="entry name" value="helicase SKI2W isoform X2"/>
    <property type="match status" value="1"/>
</dbReference>
<dbReference type="FunFam" id="1.10.3380.30:FF:000001">
    <property type="entry name" value="Ski2 ATP-dependent RNA helicase"/>
    <property type="match status" value="1"/>
</dbReference>
<dbReference type="FunFam" id="1.10.3380.30:FF:000005">
    <property type="entry name" value="Ski2 like RNA helicase"/>
    <property type="match status" value="1"/>
</dbReference>
<dbReference type="Gene3D" id="1.10.3380.30">
    <property type="match status" value="2"/>
</dbReference>
<dbReference type="Gene3D" id="3.40.50.300">
    <property type="entry name" value="P-loop containing nucleotide triphosphate hydrolases"/>
    <property type="match status" value="2"/>
</dbReference>
<dbReference type="InterPro" id="IPR011545">
    <property type="entry name" value="DEAD/DEAH_box_helicase_dom"/>
</dbReference>
<dbReference type="InterPro" id="IPR014001">
    <property type="entry name" value="Helicase_ATP-bd"/>
</dbReference>
<dbReference type="InterPro" id="IPR001650">
    <property type="entry name" value="Helicase_C-like"/>
</dbReference>
<dbReference type="InterPro" id="IPR048392">
    <property type="entry name" value="MTR4-like_stalk"/>
</dbReference>
<dbReference type="InterPro" id="IPR025696">
    <property type="entry name" value="MTR4_beta-barrel"/>
</dbReference>
<dbReference type="InterPro" id="IPR027417">
    <property type="entry name" value="P-loop_NTPase"/>
</dbReference>
<dbReference type="InterPro" id="IPR050699">
    <property type="entry name" value="RNA-DNA_Helicase"/>
</dbReference>
<dbReference type="InterPro" id="IPR016438">
    <property type="entry name" value="SKI2-like"/>
</dbReference>
<dbReference type="InterPro" id="IPR012961">
    <property type="entry name" value="Ski2/MTR4_C"/>
</dbReference>
<dbReference type="InterPro" id="IPR040801">
    <property type="entry name" value="Ski2_N"/>
</dbReference>
<dbReference type="PANTHER" id="PTHR12131">
    <property type="entry name" value="ATP-DEPENDENT RNA AND DNA HELICASE"/>
    <property type="match status" value="1"/>
</dbReference>
<dbReference type="PANTHER" id="PTHR12131:SF1">
    <property type="entry name" value="ATP-DEPENDENT RNA HELICASE SUPV3L1, MITOCHONDRIAL-RELATED"/>
    <property type="match status" value="1"/>
</dbReference>
<dbReference type="Pfam" id="PF00270">
    <property type="entry name" value="DEAD"/>
    <property type="match status" value="1"/>
</dbReference>
<dbReference type="Pfam" id="PF08148">
    <property type="entry name" value="DSHCT"/>
    <property type="match status" value="1"/>
</dbReference>
<dbReference type="Pfam" id="PF00271">
    <property type="entry name" value="Helicase_C"/>
    <property type="match status" value="1"/>
</dbReference>
<dbReference type="Pfam" id="PF21408">
    <property type="entry name" value="MTR4-like_stalk"/>
    <property type="match status" value="1"/>
</dbReference>
<dbReference type="Pfam" id="PF13234">
    <property type="entry name" value="MTR4_beta-barrel"/>
    <property type="match status" value="1"/>
</dbReference>
<dbReference type="Pfam" id="PF17911">
    <property type="entry name" value="Ski2_N"/>
    <property type="match status" value="1"/>
</dbReference>
<dbReference type="PIRSF" id="PIRSF005198">
    <property type="entry name" value="Antiviral_helicase_SKI2"/>
    <property type="match status" value="1"/>
</dbReference>
<dbReference type="SMART" id="SM00487">
    <property type="entry name" value="DEXDc"/>
    <property type="match status" value="1"/>
</dbReference>
<dbReference type="SMART" id="SM01142">
    <property type="entry name" value="DSHCT"/>
    <property type="match status" value="1"/>
</dbReference>
<dbReference type="SMART" id="SM00490">
    <property type="entry name" value="HELICc"/>
    <property type="match status" value="1"/>
</dbReference>
<dbReference type="SUPFAM" id="SSF52540">
    <property type="entry name" value="P-loop containing nucleoside triphosphate hydrolases"/>
    <property type="match status" value="1"/>
</dbReference>
<dbReference type="PROSITE" id="PS51192">
    <property type="entry name" value="HELICASE_ATP_BIND_1"/>
    <property type="match status" value="1"/>
</dbReference>
<dbReference type="PROSITE" id="PS51194">
    <property type="entry name" value="HELICASE_CTER"/>
    <property type="match status" value="1"/>
</dbReference>
<organism>
    <name type="scientific">Homo sapiens</name>
    <name type="common">Human</name>
    <dbReference type="NCBI Taxonomy" id="9606"/>
    <lineage>
        <taxon>Eukaryota</taxon>
        <taxon>Metazoa</taxon>
        <taxon>Chordata</taxon>
        <taxon>Craniata</taxon>
        <taxon>Vertebrata</taxon>
        <taxon>Euteleostomi</taxon>
        <taxon>Mammalia</taxon>
        <taxon>Eutheria</taxon>
        <taxon>Euarchontoglires</taxon>
        <taxon>Primates</taxon>
        <taxon>Haplorrhini</taxon>
        <taxon>Catarrhini</taxon>
        <taxon>Hominidae</taxon>
        <taxon>Homo</taxon>
    </lineage>
</organism>
<accession>Q15477</accession>
<accession>O15005</accession>
<accession>Q12902</accession>
<accession>Q15476</accession>
<accession>Q5ST66</accession>
<protein>
    <recommendedName>
        <fullName evidence="15">Superkiller complex protein 2</fullName>
        <shortName evidence="14">Ski2</shortName>
        <ecNumber evidence="9 10">3.6.4.13</ecNumber>
    </recommendedName>
    <alternativeName>
        <fullName>Helicase-like protein</fullName>
        <shortName>HLP</shortName>
    </alternativeName>
</protein>
<keyword id="KW-0002">3D-structure</keyword>
<keyword id="KW-0067">ATP-binding</keyword>
<keyword id="KW-0963">Cytoplasm</keyword>
<keyword id="KW-0225">Disease variant</keyword>
<keyword id="KW-0347">Helicase</keyword>
<keyword id="KW-0378">Hydrolase</keyword>
<keyword id="KW-0547">Nucleotide-binding</keyword>
<keyword id="KW-0539">Nucleus</keyword>
<keyword id="KW-0597">Phosphoprotein</keyword>
<keyword id="KW-1267">Proteomics identification</keyword>
<keyword id="KW-1185">Reference proteome</keyword>
<keyword id="KW-0694">RNA-binding</keyword>
<evidence type="ECO:0000255" key="1">
    <source>
        <dbReference type="PROSITE-ProRule" id="PRU00541"/>
    </source>
</evidence>
<evidence type="ECO:0000255" key="2">
    <source>
        <dbReference type="PROSITE-ProRule" id="PRU00542"/>
    </source>
</evidence>
<evidence type="ECO:0000256" key="3">
    <source>
        <dbReference type="SAM" id="MobiDB-lite"/>
    </source>
</evidence>
<evidence type="ECO:0000269" key="4">
    <source>
    </source>
</evidence>
<evidence type="ECO:0000269" key="5">
    <source>
    </source>
</evidence>
<evidence type="ECO:0000269" key="6">
    <source>
    </source>
</evidence>
<evidence type="ECO:0000269" key="7">
    <source>
    </source>
</evidence>
<evidence type="ECO:0000269" key="8">
    <source>
    </source>
</evidence>
<evidence type="ECO:0000269" key="9">
    <source>
    </source>
</evidence>
<evidence type="ECO:0000269" key="10">
    <source>
    </source>
</evidence>
<evidence type="ECO:0000269" key="11">
    <source>
    </source>
</evidence>
<evidence type="ECO:0000269" key="12">
    <source ref="4"/>
</evidence>
<evidence type="ECO:0000303" key="13">
    <source>
    </source>
</evidence>
<evidence type="ECO:0000303" key="14">
    <source>
    </source>
</evidence>
<evidence type="ECO:0000305" key="15"/>
<evidence type="ECO:0000305" key="16">
    <source>
    </source>
</evidence>
<evidence type="ECO:0000312" key="17">
    <source>
        <dbReference type="HGNC" id="HGNC:10898"/>
    </source>
</evidence>
<evidence type="ECO:0007744" key="18">
    <source>
        <dbReference type="PDB" id="7QDR"/>
    </source>
</evidence>
<evidence type="ECO:0007744" key="19">
    <source>
        <dbReference type="PDB" id="7QDS"/>
    </source>
</evidence>
<evidence type="ECO:0007744" key="20">
    <source>
        <dbReference type="PDB" id="7QDY"/>
    </source>
</evidence>
<evidence type="ECO:0007744" key="21">
    <source>
        <dbReference type="PDB" id="7QDZ"/>
    </source>
</evidence>
<evidence type="ECO:0007744" key="22">
    <source>
    </source>
</evidence>
<evidence type="ECO:0007744" key="23">
    <source>
    </source>
</evidence>
<evidence type="ECO:0007744" key="24">
    <source>
    </source>
</evidence>
<evidence type="ECO:0007744" key="25">
    <source>
    </source>
</evidence>
<evidence type="ECO:0007744" key="26">
    <source>
    </source>
</evidence>
<evidence type="ECO:0007744" key="27">
    <source>
    </source>
</evidence>
<evidence type="ECO:0007829" key="28">
    <source>
        <dbReference type="PDB" id="7QDY"/>
    </source>
</evidence>
<evidence type="ECO:0007829" key="29">
    <source>
        <dbReference type="PDB" id="9G8R"/>
    </source>
</evidence>